<accession>B1LBU6</accession>
<organism>
    <name type="scientific">Thermotoga sp. (strain RQ2)</name>
    <dbReference type="NCBI Taxonomy" id="126740"/>
    <lineage>
        <taxon>Bacteria</taxon>
        <taxon>Thermotogati</taxon>
        <taxon>Thermotogota</taxon>
        <taxon>Thermotogae</taxon>
        <taxon>Thermotogales</taxon>
        <taxon>Thermotogaceae</taxon>
        <taxon>Thermotoga</taxon>
    </lineage>
</organism>
<evidence type="ECO:0000255" key="1">
    <source>
        <dbReference type="HAMAP-Rule" id="MF_00176"/>
    </source>
</evidence>
<proteinExistence type="inferred from homology"/>
<feature type="chain" id="PRO_1000098139" description="Serine--tRNA ligase">
    <location>
        <begin position="1"/>
        <end position="425"/>
    </location>
</feature>
<feature type="binding site" evidence="1">
    <location>
        <begin position="233"/>
        <end position="235"/>
    </location>
    <ligand>
        <name>L-serine</name>
        <dbReference type="ChEBI" id="CHEBI:33384"/>
    </ligand>
</feature>
<feature type="binding site" evidence="1">
    <location>
        <begin position="264"/>
        <end position="266"/>
    </location>
    <ligand>
        <name>ATP</name>
        <dbReference type="ChEBI" id="CHEBI:30616"/>
    </ligand>
</feature>
<feature type="binding site" evidence="1">
    <location>
        <position position="287"/>
    </location>
    <ligand>
        <name>L-serine</name>
        <dbReference type="ChEBI" id="CHEBI:33384"/>
    </ligand>
</feature>
<feature type="binding site" evidence="1">
    <location>
        <begin position="351"/>
        <end position="354"/>
    </location>
    <ligand>
        <name>ATP</name>
        <dbReference type="ChEBI" id="CHEBI:30616"/>
    </ligand>
</feature>
<feature type="binding site" evidence="1">
    <location>
        <position position="387"/>
    </location>
    <ligand>
        <name>L-serine</name>
        <dbReference type="ChEBI" id="CHEBI:33384"/>
    </ligand>
</feature>
<name>SYS_THESQ</name>
<reference key="1">
    <citation type="journal article" date="2011" name="J. Bacteriol.">
        <title>Genome sequence of Thermotoga sp. strain RQ2, a hyperthermophilic bacterium isolated from a geothermally heated region of the seafloor near Ribeira Quente, the Azores.</title>
        <authorList>
            <person name="Swithers K.S."/>
            <person name="DiPippo J.L."/>
            <person name="Bruce D.C."/>
            <person name="Detter C."/>
            <person name="Tapia R."/>
            <person name="Han S."/>
            <person name="Saunders E."/>
            <person name="Goodwin L.A."/>
            <person name="Han J."/>
            <person name="Woyke T."/>
            <person name="Pitluck S."/>
            <person name="Pennacchio L."/>
            <person name="Nolan M."/>
            <person name="Mikhailova N."/>
            <person name="Lykidis A."/>
            <person name="Land M.L."/>
            <person name="Brettin T."/>
            <person name="Stetter K.O."/>
            <person name="Nelson K.E."/>
            <person name="Gogarten J.P."/>
            <person name="Noll K.M."/>
        </authorList>
    </citation>
    <scope>NUCLEOTIDE SEQUENCE [LARGE SCALE GENOMIC DNA]</scope>
    <source>
        <strain>RQ2</strain>
    </source>
</reference>
<protein>
    <recommendedName>
        <fullName evidence="1">Serine--tRNA ligase</fullName>
        <ecNumber evidence="1">6.1.1.11</ecNumber>
    </recommendedName>
    <alternativeName>
        <fullName evidence="1">Seryl-tRNA synthetase</fullName>
        <shortName evidence="1">SerRS</shortName>
    </alternativeName>
    <alternativeName>
        <fullName evidence="1">Seryl-tRNA(Ser/Sec) synthetase</fullName>
    </alternativeName>
</protein>
<keyword id="KW-0030">Aminoacyl-tRNA synthetase</keyword>
<keyword id="KW-0067">ATP-binding</keyword>
<keyword id="KW-0963">Cytoplasm</keyword>
<keyword id="KW-0436">Ligase</keyword>
<keyword id="KW-0547">Nucleotide-binding</keyword>
<keyword id="KW-0648">Protein biosynthesis</keyword>
<sequence length="425" mass="48867">MIDIKLIRQNPDFVKEALRKRGEDPAVIDEILKIDADWRATITKTNELRSRRNEISKNVARLKKEGKNAEAEALIEEGKRLGEEIKALEEKEKELQEKLNYLLLMVPNIPHESVPVGEDESQNVEVRRWGEPREFDFTPLAHWDLGPAWGLMDFSRASKLSGSRFTVMYGKLARLERALINFMLDVHTKEHGYTEVWVPHLVKRETITITGQLPKFEEELYLAERDDLFLIPTAEVPLAALHSGEILEEKELPKKYVAYTPCYRREAGSYGKDVRGMIRQHQFDKVELVWVTTPKRSFEDLEQLVKDAETILQKLELPYRVVSLCTGDLGFTSAKTYDIEVWLPSYNAYKEISSCSNVTDFQARRGNMRYRRRSDGKLEYVHTLNGSGIAVGRALVAILENYQQPDGSVRVPEVLVPYTGFEVIP</sequence>
<gene>
    <name evidence="1" type="primary">serS</name>
    <name type="ordered locus">TRQ2_1450</name>
</gene>
<dbReference type="EC" id="6.1.1.11" evidence="1"/>
<dbReference type="EMBL" id="CP000969">
    <property type="protein sequence ID" value="ACB09794.1"/>
    <property type="molecule type" value="Genomic_DNA"/>
</dbReference>
<dbReference type="RefSeq" id="WP_012311140.1">
    <property type="nucleotide sequence ID" value="NC_010483.1"/>
</dbReference>
<dbReference type="SMR" id="B1LBU6"/>
<dbReference type="KEGG" id="trq:TRQ2_1450"/>
<dbReference type="HOGENOM" id="CLU_023797_1_1_0"/>
<dbReference type="UniPathway" id="UPA00906">
    <property type="reaction ID" value="UER00895"/>
</dbReference>
<dbReference type="Proteomes" id="UP000001687">
    <property type="component" value="Chromosome"/>
</dbReference>
<dbReference type="GO" id="GO:0005737">
    <property type="term" value="C:cytoplasm"/>
    <property type="evidence" value="ECO:0007669"/>
    <property type="project" value="UniProtKB-SubCell"/>
</dbReference>
<dbReference type="GO" id="GO:0005524">
    <property type="term" value="F:ATP binding"/>
    <property type="evidence" value="ECO:0007669"/>
    <property type="project" value="UniProtKB-UniRule"/>
</dbReference>
<dbReference type="GO" id="GO:0004828">
    <property type="term" value="F:serine-tRNA ligase activity"/>
    <property type="evidence" value="ECO:0007669"/>
    <property type="project" value="UniProtKB-UniRule"/>
</dbReference>
<dbReference type="GO" id="GO:0016260">
    <property type="term" value="P:selenocysteine biosynthetic process"/>
    <property type="evidence" value="ECO:0007669"/>
    <property type="project" value="UniProtKB-UniRule"/>
</dbReference>
<dbReference type="GO" id="GO:0006434">
    <property type="term" value="P:seryl-tRNA aminoacylation"/>
    <property type="evidence" value="ECO:0007669"/>
    <property type="project" value="UniProtKB-UniRule"/>
</dbReference>
<dbReference type="CDD" id="cd00770">
    <property type="entry name" value="SerRS_core"/>
    <property type="match status" value="1"/>
</dbReference>
<dbReference type="Gene3D" id="3.30.930.10">
    <property type="entry name" value="Bira Bifunctional Protein, Domain 2"/>
    <property type="match status" value="1"/>
</dbReference>
<dbReference type="Gene3D" id="1.10.287.40">
    <property type="entry name" value="Serine-tRNA synthetase, tRNA binding domain"/>
    <property type="match status" value="1"/>
</dbReference>
<dbReference type="HAMAP" id="MF_00176">
    <property type="entry name" value="Ser_tRNA_synth_type1"/>
    <property type="match status" value="1"/>
</dbReference>
<dbReference type="InterPro" id="IPR002314">
    <property type="entry name" value="aa-tRNA-synt_IIb"/>
</dbReference>
<dbReference type="InterPro" id="IPR006195">
    <property type="entry name" value="aa-tRNA-synth_II"/>
</dbReference>
<dbReference type="InterPro" id="IPR045864">
    <property type="entry name" value="aa-tRNA-synth_II/BPL/LPL"/>
</dbReference>
<dbReference type="InterPro" id="IPR002317">
    <property type="entry name" value="Ser-tRNA-ligase_type_1"/>
</dbReference>
<dbReference type="InterPro" id="IPR015866">
    <property type="entry name" value="Ser-tRNA-synth_1_N"/>
</dbReference>
<dbReference type="InterPro" id="IPR042103">
    <property type="entry name" value="SerRS_1_N_sf"/>
</dbReference>
<dbReference type="InterPro" id="IPR033729">
    <property type="entry name" value="SerRS_core"/>
</dbReference>
<dbReference type="InterPro" id="IPR010978">
    <property type="entry name" value="tRNA-bd_arm"/>
</dbReference>
<dbReference type="NCBIfam" id="TIGR00414">
    <property type="entry name" value="serS"/>
    <property type="match status" value="1"/>
</dbReference>
<dbReference type="PANTHER" id="PTHR43697:SF1">
    <property type="entry name" value="SERINE--TRNA LIGASE"/>
    <property type="match status" value="1"/>
</dbReference>
<dbReference type="PANTHER" id="PTHR43697">
    <property type="entry name" value="SERYL-TRNA SYNTHETASE"/>
    <property type="match status" value="1"/>
</dbReference>
<dbReference type="Pfam" id="PF02403">
    <property type="entry name" value="Seryl_tRNA_N"/>
    <property type="match status" value="1"/>
</dbReference>
<dbReference type="Pfam" id="PF00587">
    <property type="entry name" value="tRNA-synt_2b"/>
    <property type="match status" value="1"/>
</dbReference>
<dbReference type="PIRSF" id="PIRSF001529">
    <property type="entry name" value="Ser-tRNA-synth_IIa"/>
    <property type="match status" value="1"/>
</dbReference>
<dbReference type="PRINTS" id="PR00981">
    <property type="entry name" value="TRNASYNTHSER"/>
</dbReference>
<dbReference type="SUPFAM" id="SSF55681">
    <property type="entry name" value="Class II aaRS and biotin synthetases"/>
    <property type="match status" value="1"/>
</dbReference>
<dbReference type="SUPFAM" id="SSF46589">
    <property type="entry name" value="tRNA-binding arm"/>
    <property type="match status" value="1"/>
</dbReference>
<dbReference type="PROSITE" id="PS50862">
    <property type="entry name" value="AA_TRNA_LIGASE_II"/>
    <property type="match status" value="1"/>
</dbReference>
<comment type="function">
    <text evidence="1">Catalyzes the attachment of serine to tRNA(Ser). Is also able to aminoacylate tRNA(Sec) with serine, to form the misacylated tRNA L-seryl-tRNA(Sec), which will be further converted into selenocysteinyl-tRNA(Sec).</text>
</comment>
<comment type="catalytic activity">
    <reaction evidence="1">
        <text>tRNA(Ser) + L-serine + ATP = L-seryl-tRNA(Ser) + AMP + diphosphate + H(+)</text>
        <dbReference type="Rhea" id="RHEA:12292"/>
        <dbReference type="Rhea" id="RHEA-COMP:9669"/>
        <dbReference type="Rhea" id="RHEA-COMP:9703"/>
        <dbReference type="ChEBI" id="CHEBI:15378"/>
        <dbReference type="ChEBI" id="CHEBI:30616"/>
        <dbReference type="ChEBI" id="CHEBI:33019"/>
        <dbReference type="ChEBI" id="CHEBI:33384"/>
        <dbReference type="ChEBI" id="CHEBI:78442"/>
        <dbReference type="ChEBI" id="CHEBI:78533"/>
        <dbReference type="ChEBI" id="CHEBI:456215"/>
        <dbReference type="EC" id="6.1.1.11"/>
    </reaction>
</comment>
<comment type="catalytic activity">
    <reaction evidence="1">
        <text>tRNA(Sec) + L-serine + ATP = L-seryl-tRNA(Sec) + AMP + diphosphate + H(+)</text>
        <dbReference type="Rhea" id="RHEA:42580"/>
        <dbReference type="Rhea" id="RHEA-COMP:9742"/>
        <dbReference type="Rhea" id="RHEA-COMP:10128"/>
        <dbReference type="ChEBI" id="CHEBI:15378"/>
        <dbReference type="ChEBI" id="CHEBI:30616"/>
        <dbReference type="ChEBI" id="CHEBI:33019"/>
        <dbReference type="ChEBI" id="CHEBI:33384"/>
        <dbReference type="ChEBI" id="CHEBI:78442"/>
        <dbReference type="ChEBI" id="CHEBI:78533"/>
        <dbReference type="ChEBI" id="CHEBI:456215"/>
        <dbReference type="EC" id="6.1.1.11"/>
    </reaction>
</comment>
<comment type="pathway">
    <text evidence="1">Aminoacyl-tRNA biosynthesis; selenocysteinyl-tRNA(Sec) biosynthesis; L-seryl-tRNA(Sec) from L-serine and tRNA(Sec): step 1/1.</text>
</comment>
<comment type="subunit">
    <text evidence="1">Homodimer. The tRNA molecule binds across the dimer.</text>
</comment>
<comment type="subcellular location">
    <subcellularLocation>
        <location evidence="1">Cytoplasm</location>
    </subcellularLocation>
</comment>
<comment type="domain">
    <text evidence="1">Consists of two distinct domains, a catalytic core and a N-terminal extension that is involved in tRNA binding.</text>
</comment>
<comment type="similarity">
    <text evidence="1">Belongs to the class-II aminoacyl-tRNA synthetase family. Type-1 seryl-tRNA synthetase subfamily.</text>
</comment>